<name>AN32A_CANLF</name>
<dbReference type="EMBL" id="AY162293">
    <property type="protein sequence ID" value="AAN85118.1"/>
    <property type="molecule type" value="mRNA"/>
</dbReference>
<dbReference type="FunCoup" id="Q8HY67">
    <property type="interactions" value="1805"/>
</dbReference>
<dbReference type="STRING" id="9615.ENSCAFP00000025783"/>
<dbReference type="PaxDb" id="9612-ENSCAFP00000025783"/>
<dbReference type="eggNOG" id="KOG2739">
    <property type="taxonomic scope" value="Eukaryota"/>
</dbReference>
<dbReference type="InParanoid" id="Q8HY67"/>
<dbReference type="Proteomes" id="UP000002254">
    <property type="component" value="Unplaced"/>
</dbReference>
<dbReference type="Proteomes" id="UP000694429">
    <property type="component" value="Unplaced"/>
</dbReference>
<dbReference type="Proteomes" id="UP000694542">
    <property type="component" value="Unplaced"/>
</dbReference>
<dbReference type="Proteomes" id="UP000805418">
    <property type="component" value="Unplaced"/>
</dbReference>
<dbReference type="GO" id="GO:0005737">
    <property type="term" value="C:cytoplasm"/>
    <property type="evidence" value="ECO:0000250"/>
    <property type="project" value="UniProtKB"/>
</dbReference>
<dbReference type="GO" id="GO:0005783">
    <property type="term" value="C:endoplasmic reticulum"/>
    <property type="evidence" value="ECO:0000250"/>
    <property type="project" value="UniProtKB"/>
</dbReference>
<dbReference type="GO" id="GO:0005634">
    <property type="term" value="C:nucleus"/>
    <property type="evidence" value="ECO:0000250"/>
    <property type="project" value="UniProtKB"/>
</dbReference>
<dbReference type="GO" id="GO:0048471">
    <property type="term" value="C:perinuclear region of cytoplasm"/>
    <property type="evidence" value="ECO:0000250"/>
    <property type="project" value="UniProtKB"/>
</dbReference>
<dbReference type="GO" id="GO:0042393">
    <property type="term" value="F:histone binding"/>
    <property type="evidence" value="ECO:0000318"/>
    <property type="project" value="GO_Central"/>
</dbReference>
<dbReference type="GO" id="GO:0006913">
    <property type="term" value="P:nucleocytoplasmic transport"/>
    <property type="evidence" value="ECO:0000250"/>
    <property type="project" value="UniProtKB"/>
</dbReference>
<dbReference type="GO" id="GO:0042981">
    <property type="term" value="P:regulation of apoptotic process"/>
    <property type="evidence" value="ECO:0000318"/>
    <property type="project" value="GO_Central"/>
</dbReference>
<dbReference type="FunFam" id="3.80.10.10:FF:000003">
    <property type="entry name" value="Acidic leucine-rich nuclear phosphoprotein 32 family member A"/>
    <property type="match status" value="1"/>
</dbReference>
<dbReference type="Gene3D" id="3.80.10.10">
    <property type="entry name" value="Ribonuclease Inhibitor"/>
    <property type="match status" value="1"/>
</dbReference>
<dbReference type="InterPro" id="IPR045081">
    <property type="entry name" value="AN32"/>
</dbReference>
<dbReference type="InterPro" id="IPR001611">
    <property type="entry name" value="Leu-rich_rpt"/>
</dbReference>
<dbReference type="InterPro" id="IPR032675">
    <property type="entry name" value="LRR_dom_sf"/>
</dbReference>
<dbReference type="InterPro" id="IPR003603">
    <property type="entry name" value="U2A'_phosphoprotein32A_C"/>
</dbReference>
<dbReference type="PANTHER" id="PTHR11375">
    <property type="entry name" value="ACIDIC LEUCINE-RICH NUCLEAR PHOSPHOPROTEIN 32"/>
    <property type="match status" value="1"/>
</dbReference>
<dbReference type="PANTHER" id="PTHR11375:SF1">
    <property type="entry name" value="ACIDIC LEUCINE-RICH NUCLEAR PHOSPHOPROTEIN 32 FAMILY MEMBER A"/>
    <property type="match status" value="1"/>
</dbReference>
<dbReference type="Pfam" id="PF14580">
    <property type="entry name" value="LRR_9"/>
    <property type="match status" value="1"/>
</dbReference>
<dbReference type="SMART" id="SM00446">
    <property type="entry name" value="LRRcap"/>
    <property type="match status" value="1"/>
</dbReference>
<dbReference type="SUPFAM" id="SSF52058">
    <property type="entry name" value="L domain-like"/>
    <property type="match status" value="1"/>
</dbReference>
<dbReference type="PROSITE" id="PS51450">
    <property type="entry name" value="LRR"/>
    <property type="match status" value="4"/>
</dbReference>
<proteinExistence type="evidence at transcript level"/>
<evidence type="ECO:0000250" key="1"/>
<evidence type="ECO:0000250" key="2">
    <source>
        <dbReference type="UniProtKB" id="P39687"/>
    </source>
</evidence>
<evidence type="ECO:0000256" key="3">
    <source>
        <dbReference type="SAM" id="MobiDB-lite"/>
    </source>
</evidence>
<evidence type="ECO:0000305" key="4"/>
<gene>
    <name type="primary">ANP32A</name>
</gene>
<protein>
    <recommendedName>
        <fullName>Acidic leucine-rich nuclear phosphoprotein 32 family member A</fullName>
    </recommendedName>
    <alternativeName>
        <fullName>Inhibitor-1 of protein phosphatase type 2A</fullName>
    </alternativeName>
</protein>
<comment type="function">
    <text evidence="2">Multifunctional protein that is involved in the regulation of many processes including tumor suppression, apoptosis, cell cycle progression or transcription. Promotes apoptosis by favouring the activation of caspase-9/CASP9 and allowing apoptosome formation. In addition, plays a role in the modulation of histone acetylation and transcription as part of the INHAT (inhibitor of histone acetyltransferases) complex. Inhibits the histone-acetyltranferase activity of EP300/CREBBP (CREB-binding protein) and EP300/CREBBP-associated factor by histone masking. Preferentially binds to unmodified histone H3 and sterically inhibiting its acetylation and phosphorylation leading to cell growth inhibition. Participates in other biochemical processes such as regulation of mRNA nuclear-to-cytoplasmic translocation and stability by its association with ELAVL1 (Hu-antigen R). Plays a role in E4F1-mediated transcriptional repression as well as inhibition of protein phosphatase 2A.</text>
</comment>
<comment type="subunit">
    <text evidence="1">Component of the SET complex, composed of at least ANP32A, APEX1, HMGB2, NME1, SET and TREX1. Directly interacts with SET. Interacts with ATXN1/SCA1. Interacts with MAP1B. Interacts with ELAVL1. Part of the INHAT (inhibitor of histone acetyltransferases) complex. Interacts with E4F1 (By similarity).</text>
</comment>
<comment type="subcellular location">
    <subcellularLocation>
        <location>Nucleus</location>
    </subcellularLocation>
    <subcellularLocation>
        <location>Cytoplasm</location>
    </subcellularLocation>
    <subcellularLocation>
        <location evidence="1">Endoplasmic reticulum</location>
    </subcellularLocation>
    <text evidence="1">Shuttles between nucleus and cytoplasm. Translocates to the cytoplasm during the process of neuritogenesis (By similarity).</text>
</comment>
<comment type="PTM">
    <text evidence="2">Phosphorylated on serine residues, at least in part by casein kinase 2/CK2.</text>
</comment>
<comment type="PTM">
    <text evidence="1">Some glutamate residues are glycylated by TTLL8. This modification occurs exclusively on glutamate residues and results in a glycine chain on the gamma-carboxyl group (By similarity).</text>
</comment>
<comment type="similarity">
    <text evidence="4">Belongs to the ANP32 family.</text>
</comment>
<accession>Q8HY67</accession>
<organism>
    <name type="scientific">Canis lupus familiaris</name>
    <name type="common">Dog</name>
    <name type="synonym">Canis familiaris</name>
    <dbReference type="NCBI Taxonomy" id="9615"/>
    <lineage>
        <taxon>Eukaryota</taxon>
        <taxon>Metazoa</taxon>
        <taxon>Chordata</taxon>
        <taxon>Craniata</taxon>
        <taxon>Vertebrata</taxon>
        <taxon>Euteleostomi</taxon>
        <taxon>Mammalia</taxon>
        <taxon>Eutheria</taxon>
        <taxon>Laurasiatheria</taxon>
        <taxon>Carnivora</taxon>
        <taxon>Caniformia</taxon>
        <taxon>Canidae</taxon>
        <taxon>Canis</taxon>
    </lineage>
</organism>
<sequence>MEMGRRIHLELRNRTPSDVKELVLDNCRSIEGKIEGLTDEFEELEFLSTINVGLTSVANLPKLNKLKKLELSDNRISGGLEVLAEKCPNLTHLNLSGNKIKDLSTIEPLKKLENLKSLDLFNCEVTNLNDYRENVFKLLPQLTYLDGYDRDDKEAPDSDAEGYVEGLDDDEEDEDEEEYDEDAQVVEDEEDEEEEEEGEEEDVSGEEEEDEEGYNDGEVDDEEDEEDVGEEERGQKRKREPXDXGEDDD</sequence>
<feature type="chain" id="PRO_0000240184" description="Acidic leucine-rich nuclear phosphoprotein 32 family member A">
    <location>
        <begin position="1"/>
        <end position="249"/>
    </location>
</feature>
<feature type="repeat" description="LRR 1">
    <location>
        <begin position="18"/>
        <end position="41"/>
    </location>
</feature>
<feature type="repeat" description="LRR 2">
    <location>
        <begin position="43"/>
        <end position="64"/>
    </location>
</feature>
<feature type="repeat" description="LRR 3">
    <location>
        <begin position="65"/>
        <end position="87"/>
    </location>
</feature>
<feature type="repeat" description="LRR 4">
    <location>
        <begin position="89"/>
        <end position="110"/>
    </location>
</feature>
<feature type="domain" description="LRRCT">
    <location>
        <begin position="123"/>
        <end position="161"/>
    </location>
</feature>
<feature type="region of interest" description="Disordered" evidence="3">
    <location>
        <begin position="147"/>
        <end position="249"/>
    </location>
</feature>
<feature type="region of interest" description="Necessary for tumor-suppressive function" evidence="1">
    <location>
        <begin position="150"/>
        <end position="174"/>
    </location>
</feature>
<feature type="region of interest" description="Interaction with E4F1" evidence="1">
    <location>
        <begin position="165"/>
        <end position="249"/>
    </location>
</feature>
<feature type="compositionally biased region" description="Basic and acidic residues" evidence="3">
    <location>
        <begin position="147"/>
        <end position="156"/>
    </location>
</feature>
<feature type="compositionally biased region" description="Acidic residues" evidence="3">
    <location>
        <begin position="157"/>
        <end position="230"/>
    </location>
</feature>
<feature type="modified residue" description="Phosphothreonine" evidence="2">
    <location>
        <position position="15"/>
    </location>
</feature>
<feature type="modified residue" description="Phosphoserine" evidence="2">
    <location>
        <position position="17"/>
    </location>
</feature>
<feature type="modified residue" description="Phosphoserine" evidence="2">
    <location>
        <position position="158"/>
    </location>
</feature>
<feature type="modified residue" description="Phosphoserine" evidence="2">
    <location>
        <position position="204"/>
    </location>
</feature>
<reference key="1">
    <citation type="submission" date="2002-10" db="EMBL/GenBank/DDBJ databases">
        <authorList>
            <person name="Mishra S."/>
            <person name="Rastogi S."/>
            <person name="Gupta R.C."/>
            <person name="Sabbah H.N."/>
        </authorList>
    </citation>
    <scope>NUCLEOTIDE SEQUENCE [MRNA]</scope>
    <source>
        <tissue>Heart</tissue>
    </source>
</reference>
<reference key="2">
    <citation type="journal article" date="2005" name="Cerebellum">
        <title>The Anp32 family of proteins containing leucine-rich repeats.</title>
        <authorList>
            <person name="Matilla A."/>
            <person name="Radrizzani M."/>
        </authorList>
    </citation>
    <scope>GENE FAMILY</scope>
    <scope>NOMENCLATURE</scope>
</reference>
<keyword id="KW-0963">Cytoplasm</keyword>
<keyword id="KW-0256">Endoplasmic reticulum</keyword>
<keyword id="KW-0433">Leucine-rich repeat</keyword>
<keyword id="KW-0539">Nucleus</keyword>
<keyword id="KW-0597">Phosphoprotein</keyword>
<keyword id="KW-1185">Reference proteome</keyword>
<keyword id="KW-0677">Repeat</keyword>
<keyword id="KW-0678">Repressor</keyword>
<keyword id="KW-0804">Transcription</keyword>
<keyword id="KW-0805">Transcription regulation</keyword>